<reference key="1">
    <citation type="journal article" date="1995" name="Plant Mol. Biol.">
        <title>Isolation, sequence and expression in Escherichia coli of the nitrite reductase gene from the filamentous, thermophilic cyanobacterium Phormidium laminosum.</title>
        <authorList>
            <person name="Merchan F."/>
            <person name="Prieto R."/>
            <person name="Kindle K.L."/>
            <person name="Llama M.J."/>
            <person name="Serra J.L."/>
            <person name="Fernandez E."/>
        </authorList>
    </citation>
    <scope>NUCLEOTIDE SEQUENCE [GENOMIC DNA]</scope>
    <source>
        <strain>OH-1-P-CL1</strain>
    </source>
</reference>
<comment type="catalytic activity">
    <reaction>
        <text>6 oxidized [2Fe-2S]-[ferredoxin] + NH4(+) + 2 H2O = nitrite + 6 reduced [2Fe-2S]-[ferredoxin] + 8 H(+)</text>
        <dbReference type="Rhea" id="RHEA:18041"/>
        <dbReference type="Rhea" id="RHEA-COMP:10000"/>
        <dbReference type="Rhea" id="RHEA-COMP:10001"/>
        <dbReference type="ChEBI" id="CHEBI:15377"/>
        <dbReference type="ChEBI" id="CHEBI:15378"/>
        <dbReference type="ChEBI" id="CHEBI:16301"/>
        <dbReference type="ChEBI" id="CHEBI:28938"/>
        <dbReference type="ChEBI" id="CHEBI:33737"/>
        <dbReference type="ChEBI" id="CHEBI:33738"/>
        <dbReference type="EC" id="1.7.7.1"/>
    </reaction>
</comment>
<comment type="similarity">
    <text evidence="2">Belongs to the nitrite and sulfite reductase 4Fe-4S domain family.</text>
</comment>
<name>NIR_LEPLM</name>
<gene>
    <name type="primary">nirA</name>
    <name type="synonym">nir</name>
</gene>
<sequence length="510" mass="56709">MTSTVPAETSLNKFEKLKSEKDGLAVKSELEDFARLGWEAMDETDRDHRLRWMGVFFRPVSQGKFMLRMRIPNGILTSGQIRVLAEVVERYGEDGNADITTRPNLQLRGIRLEDIPDIFRRFEQAGLTSIQSGMDNVRNITGSPVAGIDADELIDTRGLVRKVQDMITNNGEGNPSFSNLPRKFNIAIAGCRDNSVHAEINDIAFVPAYKDGKLGFNVLVGGFFSAKRCEAAVPLNAWVDPRDVVALCEAILIVYRITGCGANRQKSRLMWLIDEWGMDKFRAEVEQQLGHPLQTAAPKDEILWDKRDHIGIHAQKKPGLNYVGLLVPVGRLYAPMFDLARIAEVYGDGEMRLTVERKRDHSRTCPMSSVASLLKEPLLEKFSVSPGLLVRSLVSCTGAQFCNFALIETKNRAMALIRELESELELARPVRIHWTGCPNSCGQPQVADIGLMGTKVRKDGKATEGVDLYMGGKVGKHAELGTCVQKGIPCDDLKPILRNLLIEHFGARPK</sequence>
<evidence type="ECO:0000250" key="1"/>
<evidence type="ECO:0000305" key="2"/>
<accession>Q51879</accession>
<protein>
    <recommendedName>
        <fullName>Ferredoxin--nitrite reductase</fullName>
        <ecNumber>1.7.7.1</ecNumber>
    </recommendedName>
</protein>
<organism>
    <name type="scientific">Leptolyngbya laminosa</name>
    <name type="common">Phormidium laminosum</name>
    <dbReference type="NCBI Taxonomy" id="477181"/>
    <lineage>
        <taxon>Bacteria</taxon>
        <taxon>Bacillati</taxon>
        <taxon>Cyanobacteriota</taxon>
        <taxon>Cyanophyceae</taxon>
        <taxon>Leptolyngbyales</taxon>
        <taxon>Leptolyngbyaceae</taxon>
        <taxon>Leptolyngbya group</taxon>
        <taxon>Leptolyngbya</taxon>
    </lineage>
</organism>
<feature type="chain" id="PRO_0000199956" description="Ferredoxin--nitrite reductase">
    <location>
        <begin position="1"/>
        <end position="510"/>
    </location>
</feature>
<feature type="binding site" evidence="1">
    <location>
        <position position="396"/>
    </location>
    <ligand>
        <name>[4Fe-4S] cluster</name>
        <dbReference type="ChEBI" id="CHEBI:49883"/>
    </ligand>
</feature>
<feature type="binding site" evidence="1">
    <location>
        <position position="402"/>
    </location>
    <ligand>
        <name>[4Fe-4S] cluster</name>
        <dbReference type="ChEBI" id="CHEBI:49883"/>
    </ligand>
</feature>
<feature type="binding site" evidence="1">
    <location>
        <position position="437"/>
    </location>
    <ligand>
        <name>[4Fe-4S] cluster</name>
        <dbReference type="ChEBI" id="CHEBI:49883"/>
    </ligand>
</feature>
<feature type="binding site" evidence="1">
    <location>
        <position position="441"/>
    </location>
    <ligand>
        <name>[4Fe-4S] cluster</name>
        <dbReference type="ChEBI" id="CHEBI:49883"/>
    </ligand>
</feature>
<feature type="binding site" description="axial binding residue" evidence="1">
    <location>
        <position position="441"/>
    </location>
    <ligand>
        <name>siroheme</name>
        <dbReference type="ChEBI" id="CHEBI:60052"/>
    </ligand>
    <ligandPart>
        <name>Fe</name>
        <dbReference type="ChEBI" id="CHEBI:18248"/>
    </ligandPart>
</feature>
<dbReference type="EC" id="1.7.7.1"/>
<dbReference type="EMBL" id="Z19598">
    <property type="protein sequence ID" value="CAA79655.1"/>
    <property type="molecule type" value="Genomic_DNA"/>
</dbReference>
<dbReference type="PIR" id="S56640">
    <property type="entry name" value="S56640"/>
</dbReference>
<dbReference type="SMR" id="Q51879"/>
<dbReference type="GO" id="GO:0051539">
    <property type="term" value="F:4 iron, 4 sulfur cluster binding"/>
    <property type="evidence" value="ECO:0007669"/>
    <property type="project" value="UniProtKB-KW"/>
</dbReference>
<dbReference type="GO" id="GO:0048307">
    <property type="term" value="F:ferredoxin-nitrite reductase activity"/>
    <property type="evidence" value="ECO:0007669"/>
    <property type="project" value="UniProtKB-EC"/>
</dbReference>
<dbReference type="GO" id="GO:0020037">
    <property type="term" value="F:heme binding"/>
    <property type="evidence" value="ECO:0007669"/>
    <property type="project" value="InterPro"/>
</dbReference>
<dbReference type="GO" id="GO:0046872">
    <property type="term" value="F:metal ion binding"/>
    <property type="evidence" value="ECO:0007669"/>
    <property type="project" value="UniProtKB-KW"/>
</dbReference>
<dbReference type="GO" id="GO:0042128">
    <property type="term" value="P:nitrate assimilation"/>
    <property type="evidence" value="ECO:0007669"/>
    <property type="project" value="UniProtKB-KW"/>
</dbReference>
<dbReference type="Gene3D" id="3.90.480.20">
    <property type="match status" value="1"/>
</dbReference>
<dbReference type="Gene3D" id="3.30.413.10">
    <property type="entry name" value="Sulfite Reductase Hemoprotein, domain 1"/>
    <property type="match status" value="2"/>
</dbReference>
<dbReference type="InterPro" id="IPR051329">
    <property type="entry name" value="NIR_SIR_4Fe-4S"/>
</dbReference>
<dbReference type="InterPro" id="IPR005117">
    <property type="entry name" value="NiRdtase/SiRdtase_haem-b_fer"/>
</dbReference>
<dbReference type="InterPro" id="IPR036136">
    <property type="entry name" value="Nit/Sulf_reduc_fer-like_dom_sf"/>
</dbReference>
<dbReference type="InterPro" id="IPR006067">
    <property type="entry name" value="NO2/SO3_Rdtase_4Fe4S_dom"/>
</dbReference>
<dbReference type="InterPro" id="IPR045854">
    <property type="entry name" value="NO2/SO3_Rdtase_4Fe4S_sf"/>
</dbReference>
<dbReference type="InterPro" id="IPR006066">
    <property type="entry name" value="NO2/SO3_Rdtase_FeS/sirohaem_BS"/>
</dbReference>
<dbReference type="NCBIfam" id="NF007125">
    <property type="entry name" value="PRK09566.1"/>
    <property type="match status" value="1"/>
</dbReference>
<dbReference type="PANTHER" id="PTHR32439">
    <property type="entry name" value="FERREDOXIN--NITRITE REDUCTASE, CHLOROPLASTIC"/>
    <property type="match status" value="1"/>
</dbReference>
<dbReference type="PANTHER" id="PTHR32439:SF0">
    <property type="entry name" value="FERREDOXIN--NITRITE REDUCTASE, CHLOROPLASTIC"/>
    <property type="match status" value="1"/>
</dbReference>
<dbReference type="Pfam" id="PF01077">
    <property type="entry name" value="NIR_SIR"/>
    <property type="match status" value="2"/>
</dbReference>
<dbReference type="Pfam" id="PF03460">
    <property type="entry name" value="NIR_SIR_ferr"/>
    <property type="match status" value="2"/>
</dbReference>
<dbReference type="PRINTS" id="PR00397">
    <property type="entry name" value="SIROHAEM"/>
</dbReference>
<dbReference type="SUPFAM" id="SSF56014">
    <property type="entry name" value="Nitrite and sulphite reductase 4Fe-4S domain-like"/>
    <property type="match status" value="2"/>
</dbReference>
<dbReference type="SUPFAM" id="SSF55124">
    <property type="entry name" value="Nitrite/Sulfite reductase N-terminal domain-like"/>
    <property type="match status" value="2"/>
</dbReference>
<dbReference type="PROSITE" id="PS00365">
    <property type="entry name" value="NIR_SIR"/>
    <property type="match status" value="1"/>
</dbReference>
<proteinExistence type="inferred from homology"/>
<keyword id="KW-0004">4Fe-4S</keyword>
<keyword id="KW-0249">Electron transport</keyword>
<keyword id="KW-0349">Heme</keyword>
<keyword id="KW-0408">Iron</keyword>
<keyword id="KW-0411">Iron-sulfur</keyword>
<keyword id="KW-0479">Metal-binding</keyword>
<keyword id="KW-0534">Nitrate assimilation</keyword>
<keyword id="KW-0560">Oxidoreductase</keyword>
<keyword id="KW-0813">Transport</keyword>